<gene>
    <name type="primary">LINC00597</name>
    <name type="synonym">C15orf5</name>
</gene>
<accession>Q9H2U6</accession>
<accession>Q3SY27</accession>
<accession>Q9UMC1</accession>
<comment type="tissue specificity">
    <text evidence="1">Expressed in heart.</text>
</comment>
<comment type="caution">
    <text evidence="2">Product of a dubious CDS prediction. May be a non-coding RNA.</text>
</comment>
<keyword id="KW-1185">Reference proteome</keyword>
<protein>
    <recommendedName>
        <fullName>Putative uncharacterized protein encoded by LINC00597</fullName>
    </recommendedName>
</protein>
<sequence length="94" mass="11474">MLKNRELLKIFEQASHMMKLIEEHCICDCIWMEWEDLEAKTLDRRPPEQTRRERCSCGNGKRWAKPKITTEKKNHPDFMIDWMYFETPLSIQMK</sequence>
<proteinExistence type="uncertain"/>
<name>CO005_HUMAN</name>
<organism>
    <name type="scientific">Homo sapiens</name>
    <name type="common">Human</name>
    <dbReference type="NCBI Taxonomy" id="9606"/>
    <lineage>
        <taxon>Eukaryota</taxon>
        <taxon>Metazoa</taxon>
        <taxon>Chordata</taxon>
        <taxon>Craniata</taxon>
        <taxon>Vertebrata</taxon>
        <taxon>Euteleostomi</taxon>
        <taxon>Mammalia</taxon>
        <taxon>Eutheria</taxon>
        <taxon>Euarchontoglires</taxon>
        <taxon>Primates</taxon>
        <taxon>Haplorrhini</taxon>
        <taxon>Catarrhini</taxon>
        <taxon>Hominidae</taxon>
        <taxon>Homo</taxon>
    </lineage>
</organism>
<reference key="1">
    <citation type="journal article" date="2001" name="DNA Seq.">
        <title>Identification of C15orf5, a heart-enriched transcript on chromosome 15q23-q24.</title>
        <authorList>
            <person name="Carim-Todd L."/>
            <person name="Sumoy L."/>
            <person name="Andreu N."/>
            <person name="Estivill X."/>
            <person name="Escarceller M."/>
        </authorList>
    </citation>
    <scope>NUCLEOTIDE SEQUENCE [MRNA]</scope>
    <scope>TISSUE SPECIFICITY</scope>
</reference>
<reference key="2">
    <citation type="journal article" date="2006" name="Nature">
        <title>Analysis of the DNA sequence and duplication history of human chromosome 15.</title>
        <authorList>
            <person name="Zody M.C."/>
            <person name="Garber M."/>
            <person name="Sharpe T."/>
            <person name="Young S.K."/>
            <person name="Rowen L."/>
            <person name="O'Neill K."/>
            <person name="Whittaker C.A."/>
            <person name="Kamal M."/>
            <person name="Chang J.L."/>
            <person name="Cuomo C.A."/>
            <person name="Dewar K."/>
            <person name="FitzGerald M.G."/>
            <person name="Kodira C.D."/>
            <person name="Madan A."/>
            <person name="Qin S."/>
            <person name="Yang X."/>
            <person name="Abbasi N."/>
            <person name="Abouelleil A."/>
            <person name="Arachchi H.M."/>
            <person name="Baradarani L."/>
            <person name="Birditt B."/>
            <person name="Bloom S."/>
            <person name="Bloom T."/>
            <person name="Borowsky M.L."/>
            <person name="Burke J."/>
            <person name="Butler J."/>
            <person name="Cook A."/>
            <person name="DeArellano K."/>
            <person name="DeCaprio D."/>
            <person name="Dorris L. III"/>
            <person name="Dors M."/>
            <person name="Eichler E.E."/>
            <person name="Engels R."/>
            <person name="Fahey J."/>
            <person name="Fleetwood P."/>
            <person name="Friedman C."/>
            <person name="Gearin G."/>
            <person name="Hall J.L."/>
            <person name="Hensley G."/>
            <person name="Johnson E."/>
            <person name="Jones C."/>
            <person name="Kamat A."/>
            <person name="Kaur A."/>
            <person name="Locke D.P."/>
            <person name="Madan A."/>
            <person name="Munson G."/>
            <person name="Jaffe D.B."/>
            <person name="Lui A."/>
            <person name="Macdonald P."/>
            <person name="Mauceli E."/>
            <person name="Naylor J.W."/>
            <person name="Nesbitt R."/>
            <person name="Nicol R."/>
            <person name="O'Leary S.B."/>
            <person name="Ratcliffe A."/>
            <person name="Rounsley S."/>
            <person name="She X."/>
            <person name="Sneddon K.M.B."/>
            <person name="Stewart S."/>
            <person name="Sougnez C."/>
            <person name="Stone S.M."/>
            <person name="Topham K."/>
            <person name="Vincent D."/>
            <person name="Wang S."/>
            <person name="Zimmer A.R."/>
            <person name="Birren B.W."/>
            <person name="Hood L."/>
            <person name="Lander E.S."/>
            <person name="Nusbaum C."/>
        </authorList>
    </citation>
    <scope>NUCLEOTIDE SEQUENCE [LARGE SCALE GENOMIC DNA]</scope>
</reference>
<reference key="3">
    <citation type="journal article" date="2004" name="Genome Res.">
        <title>The status, quality, and expansion of the NIH full-length cDNA project: the Mammalian Gene Collection (MGC).</title>
        <authorList>
            <consortium name="The MGC Project Team"/>
        </authorList>
    </citation>
    <scope>NUCLEOTIDE SEQUENCE [LARGE SCALE MRNA]</scope>
</reference>
<reference key="4">
    <citation type="submission" date="1999-07" db="EMBL/GenBank/DDBJ databases">
        <authorList>
            <consortium name="The European IMAGE consortium"/>
        </authorList>
    </citation>
    <scope>NUCLEOTIDE SEQUENCE [LARGE SCALE MRNA] OF 7-94</scope>
</reference>
<feature type="chain" id="PRO_0000089979" description="Putative uncharacterized protein encoded by LINC00597">
    <location>
        <begin position="1"/>
        <end position="94"/>
    </location>
</feature>
<evidence type="ECO:0000269" key="1">
    <source>
    </source>
</evidence>
<evidence type="ECO:0000305" key="2"/>
<dbReference type="EMBL" id="AF216224">
    <property type="protein sequence ID" value="AAG44088.1"/>
    <property type="molecule type" value="mRNA"/>
</dbReference>
<dbReference type="EMBL" id="AC087465">
    <property type="status" value="NOT_ANNOTATED_CDS"/>
    <property type="molecule type" value="Genomic_DNA"/>
</dbReference>
<dbReference type="EMBL" id="BC069765">
    <property type="status" value="NOT_ANNOTATED_CDS"/>
    <property type="molecule type" value="mRNA"/>
</dbReference>
<dbReference type="EMBL" id="BC103988">
    <property type="status" value="NOT_ANNOTATED_CDS"/>
    <property type="molecule type" value="mRNA"/>
</dbReference>
<dbReference type="EMBL" id="BC103990">
    <property type="status" value="NOT_ANNOTATED_CDS"/>
    <property type="molecule type" value="mRNA"/>
</dbReference>
<dbReference type="EMBL" id="BC103991">
    <property type="status" value="NOT_ANNOTATED_CDS"/>
    <property type="molecule type" value="mRNA"/>
</dbReference>
<dbReference type="EMBL" id="AL109679">
    <property type="protein sequence ID" value="CAB52019.1"/>
    <property type="molecule type" value="mRNA"/>
</dbReference>
<dbReference type="BioMuta" id="HGNC:1193"/>
<dbReference type="AGR" id="HGNC:1193"/>
<dbReference type="GeneCards" id="LINC00597"/>
<dbReference type="HGNC" id="HGNC:1193">
    <property type="gene designation" value="LINC00597"/>
</dbReference>
<dbReference type="neXtProt" id="NX_Q9H2U6"/>
<dbReference type="InParanoid" id="Q9H2U6"/>
<dbReference type="PAN-GO" id="Q9H2U6">
    <property type="GO annotations" value="0 GO annotations based on evolutionary models"/>
</dbReference>
<dbReference type="PathwayCommons" id="Q9H2U6"/>
<dbReference type="Pharos" id="Q9H2U6">
    <property type="development level" value="Tdark"/>
</dbReference>
<dbReference type="PRO" id="PR:Q9H2U6"/>
<dbReference type="Proteomes" id="UP000005640">
    <property type="component" value="Unplaced"/>
</dbReference>
<dbReference type="RNAct" id="Q9H2U6">
    <property type="molecule type" value="protein"/>
</dbReference>